<keyword id="KW-0227">DNA damage</keyword>
<keyword id="KW-0234">DNA repair</keyword>
<keyword id="KW-0235">DNA replication</keyword>
<keyword id="KW-0238">DNA-binding</keyword>
<keyword id="KW-0239">DNA-directed DNA polymerase</keyword>
<keyword id="KW-0269">Exonuclease</keyword>
<keyword id="KW-0378">Hydrolase</keyword>
<keyword id="KW-0540">Nuclease</keyword>
<keyword id="KW-0548">Nucleotidyltransferase</keyword>
<keyword id="KW-0808">Transferase</keyword>
<reference key="1">
    <citation type="journal article" date="1999" name="Curr. Microbiol.">
        <title>Primary structure of the DNA polymerase I gene of an alpha-Proteobacterium, Rhizobium leguminosarum, and comparison with other family A DNA polymerases.</title>
        <authorList>
            <person name="Huang Y.-P."/>
            <person name="Downie J.A."/>
            <person name="Ito J."/>
        </authorList>
    </citation>
    <scope>NUCLEOTIDE SEQUENCE [GENOMIC DNA]</scope>
</reference>
<feature type="chain" id="PRO_0000101248" description="DNA polymerase I">
    <location>
        <begin position="1"/>
        <end position="1016"/>
    </location>
</feature>
<feature type="domain" description="5'-3' exonuclease">
    <location>
        <begin position="1"/>
        <end position="308"/>
    </location>
</feature>
<feature type="domain" description="3'-5' exonuclease">
    <location>
        <begin position="394"/>
        <end position="630"/>
    </location>
</feature>
<feature type="region of interest" description="Disordered" evidence="2">
    <location>
        <begin position="334"/>
        <end position="361"/>
    </location>
</feature>
<feature type="region of interest" description="Polymerase" evidence="1">
    <location>
        <begin position="768"/>
        <end position="1016"/>
    </location>
</feature>
<gene>
    <name type="primary">polA</name>
</gene>
<comment type="function">
    <text evidence="1">In addition to polymerase activity, this DNA polymerase exhibits 3'-5' and 5'-3' exonuclease activity.</text>
</comment>
<comment type="catalytic activity">
    <reaction>
        <text>DNA(n) + a 2'-deoxyribonucleoside 5'-triphosphate = DNA(n+1) + diphosphate</text>
        <dbReference type="Rhea" id="RHEA:22508"/>
        <dbReference type="Rhea" id="RHEA-COMP:17339"/>
        <dbReference type="Rhea" id="RHEA-COMP:17340"/>
        <dbReference type="ChEBI" id="CHEBI:33019"/>
        <dbReference type="ChEBI" id="CHEBI:61560"/>
        <dbReference type="ChEBI" id="CHEBI:173112"/>
        <dbReference type="EC" id="2.7.7.7"/>
    </reaction>
</comment>
<comment type="subunit">
    <text>Single-chain monomer with multiple functions.</text>
</comment>
<comment type="similarity">
    <text evidence="3">Belongs to the DNA polymerase type-A family.</text>
</comment>
<accession>Q9S1G2</accession>
<dbReference type="EC" id="2.7.7.7"/>
<dbReference type="EMBL" id="U86403">
    <property type="protein sequence ID" value="AAD45559.1"/>
    <property type="molecule type" value="Genomic_DNA"/>
</dbReference>
<dbReference type="SMR" id="Q9S1G2"/>
<dbReference type="eggNOG" id="COG0258">
    <property type="taxonomic scope" value="Bacteria"/>
</dbReference>
<dbReference type="eggNOG" id="COG0749">
    <property type="taxonomic scope" value="Bacteria"/>
</dbReference>
<dbReference type="GO" id="GO:0008408">
    <property type="term" value="F:3'-5' exonuclease activity"/>
    <property type="evidence" value="ECO:0007669"/>
    <property type="project" value="InterPro"/>
</dbReference>
<dbReference type="GO" id="GO:0008409">
    <property type="term" value="F:5'-3' exonuclease activity"/>
    <property type="evidence" value="ECO:0007669"/>
    <property type="project" value="InterPro"/>
</dbReference>
<dbReference type="GO" id="GO:0003677">
    <property type="term" value="F:DNA binding"/>
    <property type="evidence" value="ECO:0007669"/>
    <property type="project" value="UniProtKB-KW"/>
</dbReference>
<dbReference type="GO" id="GO:0003887">
    <property type="term" value="F:DNA-directed DNA polymerase activity"/>
    <property type="evidence" value="ECO:0007669"/>
    <property type="project" value="UniProtKB-KW"/>
</dbReference>
<dbReference type="GO" id="GO:0006261">
    <property type="term" value="P:DNA-templated DNA replication"/>
    <property type="evidence" value="ECO:0007669"/>
    <property type="project" value="InterPro"/>
</dbReference>
<dbReference type="GO" id="GO:0006302">
    <property type="term" value="P:double-strand break repair"/>
    <property type="evidence" value="ECO:0007669"/>
    <property type="project" value="TreeGrafter"/>
</dbReference>
<dbReference type="CDD" id="cd08637">
    <property type="entry name" value="DNA_pol_A_pol_I_C"/>
    <property type="match status" value="1"/>
</dbReference>
<dbReference type="CDD" id="cd06139">
    <property type="entry name" value="DNA_polA_I_Ecoli_like_exo"/>
    <property type="match status" value="1"/>
</dbReference>
<dbReference type="CDD" id="cd09898">
    <property type="entry name" value="H3TH_53EXO"/>
    <property type="match status" value="1"/>
</dbReference>
<dbReference type="CDD" id="cd09859">
    <property type="entry name" value="PIN_53EXO"/>
    <property type="match status" value="1"/>
</dbReference>
<dbReference type="FunFam" id="1.10.150.20:FF:000002">
    <property type="entry name" value="DNA polymerase I"/>
    <property type="match status" value="1"/>
</dbReference>
<dbReference type="FunFam" id="1.10.150.20:FF:000003">
    <property type="entry name" value="DNA polymerase I"/>
    <property type="match status" value="1"/>
</dbReference>
<dbReference type="FunFam" id="1.20.1060.10:FF:000001">
    <property type="entry name" value="DNA polymerase I"/>
    <property type="match status" value="1"/>
</dbReference>
<dbReference type="FunFam" id="3.30.420.10:FF:000026">
    <property type="entry name" value="DNA polymerase I"/>
    <property type="match status" value="1"/>
</dbReference>
<dbReference type="FunFam" id="3.40.50.1010:FF:000001">
    <property type="entry name" value="DNA polymerase I"/>
    <property type="match status" value="1"/>
</dbReference>
<dbReference type="Gene3D" id="3.30.70.370">
    <property type="match status" value="1"/>
</dbReference>
<dbReference type="Gene3D" id="1.10.150.20">
    <property type="entry name" value="5' to 3' exonuclease, C-terminal subdomain"/>
    <property type="match status" value="2"/>
</dbReference>
<dbReference type="Gene3D" id="3.40.50.1010">
    <property type="entry name" value="5'-nuclease"/>
    <property type="match status" value="1"/>
</dbReference>
<dbReference type="Gene3D" id="3.30.420.10">
    <property type="entry name" value="Ribonuclease H-like superfamily/Ribonuclease H"/>
    <property type="match status" value="1"/>
</dbReference>
<dbReference type="Gene3D" id="1.20.1060.10">
    <property type="entry name" value="Taq DNA Polymerase, Chain T, domain 4"/>
    <property type="match status" value="1"/>
</dbReference>
<dbReference type="InterPro" id="IPR002562">
    <property type="entry name" value="3'-5'_exonuclease_dom"/>
</dbReference>
<dbReference type="InterPro" id="IPR020046">
    <property type="entry name" value="5-3_exonucl_a-hlix_arch_N"/>
</dbReference>
<dbReference type="InterPro" id="IPR002421">
    <property type="entry name" value="5-3_exonuclease"/>
</dbReference>
<dbReference type="InterPro" id="IPR036279">
    <property type="entry name" value="5-3_exonuclease_C_sf"/>
</dbReference>
<dbReference type="InterPro" id="IPR019760">
    <property type="entry name" value="DNA-dir_DNA_pol_A_CS"/>
</dbReference>
<dbReference type="InterPro" id="IPR001098">
    <property type="entry name" value="DNA-dir_DNA_pol_A_palm_dom"/>
</dbReference>
<dbReference type="InterPro" id="IPR043502">
    <property type="entry name" value="DNA/RNA_pol_sf"/>
</dbReference>
<dbReference type="InterPro" id="IPR020045">
    <property type="entry name" value="DNA_polI_H3TH"/>
</dbReference>
<dbReference type="InterPro" id="IPR018320">
    <property type="entry name" value="DNA_polymerase_1"/>
</dbReference>
<dbReference type="InterPro" id="IPR002298">
    <property type="entry name" value="DNA_polymerase_A"/>
</dbReference>
<dbReference type="InterPro" id="IPR013520">
    <property type="entry name" value="Exonuclease_RNaseT/DNA_pol3"/>
</dbReference>
<dbReference type="InterPro" id="IPR008918">
    <property type="entry name" value="HhH2"/>
</dbReference>
<dbReference type="InterPro" id="IPR029060">
    <property type="entry name" value="PIN-like_dom_sf"/>
</dbReference>
<dbReference type="InterPro" id="IPR012337">
    <property type="entry name" value="RNaseH-like_sf"/>
</dbReference>
<dbReference type="InterPro" id="IPR036397">
    <property type="entry name" value="RNaseH_sf"/>
</dbReference>
<dbReference type="NCBIfam" id="TIGR00593">
    <property type="entry name" value="pola"/>
    <property type="match status" value="1"/>
</dbReference>
<dbReference type="NCBIfam" id="NF004397">
    <property type="entry name" value="PRK05755.1"/>
    <property type="match status" value="1"/>
</dbReference>
<dbReference type="PANTHER" id="PTHR10133">
    <property type="entry name" value="DNA POLYMERASE I"/>
    <property type="match status" value="1"/>
</dbReference>
<dbReference type="PANTHER" id="PTHR10133:SF27">
    <property type="entry name" value="DNA POLYMERASE NU"/>
    <property type="match status" value="1"/>
</dbReference>
<dbReference type="Pfam" id="PF01367">
    <property type="entry name" value="5_3_exonuc"/>
    <property type="match status" value="1"/>
</dbReference>
<dbReference type="Pfam" id="PF02739">
    <property type="entry name" value="5_3_exonuc_N"/>
    <property type="match status" value="1"/>
</dbReference>
<dbReference type="Pfam" id="PF00476">
    <property type="entry name" value="DNA_pol_A"/>
    <property type="match status" value="1"/>
</dbReference>
<dbReference type="Pfam" id="PF01612">
    <property type="entry name" value="DNA_pol_A_exo1"/>
    <property type="match status" value="1"/>
</dbReference>
<dbReference type="PRINTS" id="PR00868">
    <property type="entry name" value="DNAPOLI"/>
</dbReference>
<dbReference type="SMART" id="SM00474">
    <property type="entry name" value="35EXOc"/>
    <property type="match status" value="1"/>
</dbReference>
<dbReference type="SMART" id="SM00475">
    <property type="entry name" value="53EXOc"/>
    <property type="match status" value="1"/>
</dbReference>
<dbReference type="SMART" id="SM00479">
    <property type="entry name" value="EXOIII"/>
    <property type="match status" value="1"/>
</dbReference>
<dbReference type="SMART" id="SM00279">
    <property type="entry name" value="HhH2"/>
    <property type="match status" value="1"/>
</dbReference>
<dbReference type="SMART" id="SM00482">
    <property type="entry name" value="POLAc"/>
    <property type="match status" value="1"/>
</dbReference>
<dbReference type="SUPFAM" id="SSF47807">
    <property type="entry name" value="5' to 3' exonuclease, C-terminal subdomain"/>
    <property type="match status" value="1"/>
</dbReference>
<dbReference type="SUPFAM" id="SSF56672">
    <property type="entry name" value="DNA/RNA polymerases"/>
    <property type="match status" value="1"/>
</dbReference>
<dbReference type="SUPFAM" id="SSF88723">
    <property type="entry name" value="PIN domain-like"/>
    <property type="match status" value="1"/>
</dbReference>
<dbReference type="SUPFAM" id="SSF53098">
    <property type="entry name" value="Ribonuclease H-like"/>
    <property type="match status" value="1"/>
</dbReference>
<dbReference type="PROSITE" id="PS00447">
    <property type="entry name" value="DNA_POLYMERASE_A"/>
    <property type="match status" value="1"/>
</dbReference>
<sequence>MPNSIWTSSDARAIHARMKKGDHLFLVDGSGFIFRAFHALPPLTRKTDGLPIGAVSGFCNMLWKLLRDARNTDVGVTPTHLAVIFDYSAKTFRKDLYDAYKANRSAPPEELIPQFGLIREATRAFNLPCIETEGFEADDIIATYARQAEATGADVTIVSSDKDLMQLVSPNVHMYDSMKDKQIGIPDVIEKWGVPPEKMIDLQAMTGDSVDNVPGIPGIGPKTAAQLLEEYGDLDTLLERATEIKQVKRRETILANIDMARLSRDLVRLRTDVPLDLDLDALVLEPQNGPKLIGFLKTMEFTTLTRRVAEACDCDASAIEPAIVRIEWGETARGPDLDAAEPEPVAGGIPEVSGESVPMPPRAKAKSAVEGAFSPADLAKARAEAFATLPFDHSAYVTIRDLVTLDRWIADARATGLVAFDTETTSLDAMQAELVGFSLAIADNTADPTGTKIRAAYVPLVHKNGVGDLLGGGLADNQIPMRDALPRLKALLEDESVLKVAQNLKYDYLLLKRYGIETRSFDDTMLISYVLDAGTGAHGMDPLSEKFLGHTPIPYKDVAGSGKANVTFDLVDIDRATHYAAEDADVTLRLWLVLKPRLAAAGLTSVYERLERPLLPVLARMEARGITVDRQILSRLSGELAQGAARLEDEIYVLAGERFNIGSPKQLGDILFGKMGLSGGSKTKTGQWSTSAQVLEDLAAAGFELPRKIVDWRQVTKLKSTYTDALPGYVHPETKRVHTSYSLASTTTGRLSSSEPNLQNIPVRTAEGRKIRTAFISTPGHKLISADYSQIELRVLAHVAEIPQLTKAFEDGVDIHAMTASEMFGVPVEGMPGEVRRRAKAINFGIIYGISAFGLANQLSIERSEAGDYIKKYFERFPGIRDYMESRKAMARDKGYVETIFGRRINYPEIRSSNPSVRAFNERAAINAPIQGSAADVIRRAMIKIEPALVEVGLADRVRMLLQVHDELIFEVEDQDVEKAMPVIVSVMENATMPALEMRVPLRVDARAATNWDEAH</sequence>
<evidence type="ECO:0000250" key="1"/>
<evidence type="ECO:0000256" key="2">
    <source>
        <dbReference type="SAM" id="MobiDB-lite"/>
    </source>
</evidence>
<evidence type="ECO:0000305" key="3"/>
<protein>
    <recommendedName>
        <fullName>DNA polymerase I</fullName>
        <shortName>POL I</shortName>
        <ecNumber>2.7.7.7</ecNumber>
    </recommendedName>
</protein>
<proteinExistence type="inferred from homology"/>
<organism>
    <name type="scientific">Rhizobium leguminosarum</name>
    <dbReference type="NCBI Taxonomy" id="384"/>
    <lineage>
        <taxon>Bacteria</taxon>
        <taxon>Pseudomonadati</taxon>
        <taxon>Pseudomonadota</taxon>
        <taxon>Alphaproteobacteria</taxon>
        <taxon>Hyphomicrobiales</taxon>
        <taxon>Rhizobiaceae</taxon>
        <taxon>Rhizobium/Agrobacterium group</taxon>
        <taxon>Rhizobium</taxon>
    </lineage>
</organism>
<name>DPO1_RHILE</name>